<gene>
    <name type="primary">sra</name>
    <name type="synonym">rpsV</name>
    <name type="ordered locus">UTI89_C1698</name>
</gene>
<protein>
    <recommendedName>
        <fullName>Stationary-phase-induced ribosome-associated protein</fullName>
        <shortName>SRA</shortName>
    </recommendedName>
    <alternativeName>
        <fullName>30S ribosomal protein S22</fullName>
    </alternativeName>
</protein>
<dbReference type="EMBL" id="CP000243">
    <property type="protein sequence ID" value="ABE07176.1"/>
    <property type="molecule type" value="Genomic_DNA"/>
</dbReference>
<dbReference type="RefSeq" id="WP_000841554.1">
    <property type="nucleotide sequence ID" value="NZ_CP064825.1"/>
</dbReference>
<dbReference type="GeneID" id="93775639"/>
<dbReference type="KEGG" id="eci:UTI89_C1698"/>
<dbReference type="HOGENOM" id="CLU_210948_0_0_6"/>
<dbReference type="Proteomes" id="UP000001952">
    <property type="component" value="Chromosome"/>
</dbReference>
<dbReference type="GO" id="GO:0006412">
    <property type="term" value="P:translation"/>
    <property type="evidence" value="ECO:0007669"/>
    <property type="project" value="InterPro"/>
</dbReference>
<dbReference type="InterPro" id="IPR012607">
    <property type="entry name" value="SRA-like"/>
</dbReference>
<dbReference type="NCBIfam" id="NF007473">
    <property type="entry name" value="PRK10057.1"/>
    <property type="match status" value="1"/>
</dbReference>
<dbReference type="Pfam" id="PF08136">
    <property type="entry name" value="SRA_like"/>
    <property type="match status" value="1"/>
</dbReference>
<accession>Q1RBT8</accession>
<name>SRA_ECOUT</name>
<reference key="1">
    <citation type="journal article" date="2006" name="Proc. Natl. Acad. Sci. U.S.A.">
        <title>Identification of genes subject to positive selection in uropathogenic strains of Escherichia coli: a comparative genomics approach.</title>
        <authorList>
            <person name="Chen S.L."/>
            <person name="Hung C.-S."/>
            <person name="Xu J."/>
            <person name="Reigstad C.S."/>
            <person name="Magrini V."/>
            <person name="Sabo A."/>
            <person name="Blasiar D."/>
            <person name="Bieri T."/>
            <person name="Meyer R.R."/>
            <person name="Ozersky P."/>
            <person name="Armstrong J.R."/>
            <person name="Fulton R.S."/>
            <person name="Latreille J.P."/>
            <person name="Spieth J."/>
            <person name="Hooton T.M."/>
            <person name="Mardis E.R."/>
            <person name="Hultgren S.J."/>
            <person name="Gordon J.I."/>
        </authorList>
    </citation>
    <scope>NUCLEOTIDE SEQUENCE [LARGE SCALE GENOMIC DNA]</scope>
    <source>
        <strain>UTI89 / UPEC</strain>
    </source>
</reference>
<proteinExistence type="inferred from homology"/>
<sequence length="45" mass="5096">MKSNRQARHILGLDHKISNQRKIVTEGDKSSVVNNPTGRKRPAEK</sequence>
<evidence type="ECO:0000250" key="1"/>
<evidence type="ECO:0000256" key="2">
    <source>
        <dbReference type="SAM" id="MobiDB-lite"/>
    </source>
</evidence>
<evidence type="ECO:0000305" key="3"/>
<feature type="chain" id="PRO_0000287574" description="Stationary-phase-induced ribosome-associated protein">
    <location>
        <begin position="1"/>
        <end position="45"/>
    </location>
</feature>
<feature type="region of interest" description="Disordered" evidence="2">
    <location>
        <begin position="21"/>
        <end position="45"/>
    </location>
</feature>
<comment type="function">
    <text evidence="1">Although this protein associates with the 30S subunit of the ribosome it is not considered to be a bona fide ribosomal protein.</text>
</comment>
<comment type="subunit">
    <text evidence="1">Associates exclusively with the 30S subunit; there is 0.1 copy per ribosome in the exponential phase and 0.4 copies per ribosome in the stationary phase.</text>
</comment>
<comment type="similarity">
    <text evidence="3">Belongs to the SRA family.</text>
</comment>
<organism>
    <name type="scientific">Escherichia coli (strain UTI89 / UPEC)</name>
    <dbReference type="NCBI Taxonomy" id="364106"/>
    <lineage>
        <taxon>Bacteria</taxon>
        <taxon>Pseudomonadati</taxon>
        <taxon>Pseudomonadota</taxon>
        <taxon>Gammaproteobacteria</taxon>
        <taxon>Enterobacterales</taxon>
        <taxon>Enterobacteriaceae</taxon>
        <taxon>Escherichia</taxon>
    </lineage>
</organism>